<evidence type="ECO:0000255" key="1">
    <source>
        <dbReference type="HAMAP-Rule" id="MF_01345"/>
    </source>
</evidence>
<evidence type="ECO:0000305" key="2"/>
<proteinExistence type="inferred from homology"/>
<organism>
    <name type="scientific">Koribacter versatilis (strain Ellin345)</name>
    <dbReference type="NCBI Taxonomy" id="204669"/>
    <lineage>
        <taxon>Bacteria</taxon>
        <taxon>Pseudomonadati</taxon>
        <taxon>Acidobacteriota</taxon>
        <taxon>Terriglobia</taxon>
        <taxon>Terriglobales</taxon>
        <taxon>Candidatus Korobacteraceae</taxon>
        <taxon>Candidatus Korobacter</taxon>
    </lineage>
</organism>
<keyword id="KW-1185">Reference proteome</keyword>
<keyword id="KW-0687">Ribonucleoprotein</keyword>
<keyword id="KW-0689">Ribosomal protein</keyword>
<keyword id="KW-0694">RNA-binding</keyword>
<keyword id="KW-0699">rRNA-binding</keyword>
<feature type="chain" id="PRO_0000255662" description="Small ribosomal subunit protein uS17">
    <location>
        <begin position="1"/>
        <end position="101"/>
    </location>
</feature>
<reference key="1">
    <citation type="journal article" date="2009" name="Appl. Environ. Microbiol.">
        <title>Three genomes from the phylum Acidobacteria provide insight into the lifestyles of these microorganisms in soils.</title>
        <authorList>
            <person name="Ward N.L."/>
            <person name="Challacombe J.F."/>
            <person name="Janssen P.H."/>
            <person name="Henrissat B."/>
            <person name="Coutinho P.M."/>
            <person name="Wu M."/>
            <person name="Xie G."/>
            <person name="Haft D.H."/>
            <person name="Sait M."/>
            <person name="Badger J."/>
            <person name="Barabote R.D."/>
            <person name="Bradley B."/>
            <person name="Brettin T.S."/>
            <person name="Brinkac L.M."/>
            <person name="Bruce D."/>
            <person name="Creasy T."/>
            <person name="Daugherty S.C."/>
            <person name="Davidsen T.M."/>
            <person name="DeBoy R.T."/>
            <person name="Detter J.C."/>
            <person name="Dodson R.J."/>
            <person name="Durkin A.S."/>
            <person name="Ganapathy A."/>
            <person name="Gwinn-Giglio M."/>
            <person name="Han C.S."/>
            <person name="Khouri H."/>
            <person name="Kiss H."/>
            <person name="Kothari S.P."/>
            <person name="Madupu R."/>
            <person name="Nelson K.E."/>
            <person name="Nelson W.C."/>
            <person name="Paulsen I."/>
            <person name="Penn K."/>
            <person name="Ren Q."/>
            <person name="Rosovitz M.J."/>
            <person name="Selengut J.D."/>
            <person name="Shrivastava S."/>
            <person name="Sullivan S.A."/>
            <person name="Tapia R."/>
            <person name="Thompson L.S."/>
            <person name="Watkins K.L."/>
            <person name="Yang Q."/>
            <person name="Yu C."/>
            <person name="Zafar N."/>
            <person name="Zhou L."/>
            <person name="Kuske C.R."/>
        </authorList>
    </citation>
    <scope>NUCLEOTIDE SEQUENCE [LARGE SCALE GENOMIC DNA]</scope>
    <source>
        <strain>Ellin345</strain>
    </source>
</reference>
<name>RS17_KORVE</name>
<accession>Q1ISB3</accession>
<comment type="function">
    <text evidence="1">One of the primary rRNA binding proteins, it binds specifically to the 5'-end of 16S ribosomal RNA.</text>
</comment>
<comment type="subunit">
    <text evidence="1">Part of the 30S ribosomal subunit.</text>
</comment>
<comment type="similarity">
    <text evidence="1">Belongs to the universal ribosomal protein uS17 family.</text>
</comment>
<sequence>MAETTNTPETSHRKELIGLVVSTKMQKTIVVQVERQKSHAMYGRVISRRKRFYAHDEEQTAHIGDYVRIEETRPLSKLKRWKLAEVLRRSALAPEVQEAAS</sequence>
<dbReference type="EMBL" id="CP000360">
    <property type="protein sequence ID" value="ABF40237.1"/>
    <property type="molecule type" value="Genomic_DNA"/>
</dbReference>
<dbReference type="RefSeq" id="WP_011522039.1">
    <property type="nucleotide sequence ID" value="NC_008009.1"/>
</dbReference>
<dbReference type="SMR" id="Q1ISB3"/>
<dbReference type="STRING" id="204669.Acid345_1235"/>
<dbReference type="EnsemblBacteria" id="ABF40237">
    <property type="protein sequence ID" value="ABF40237"/>
    <property type="gene ID" value="Acid345_1235"/>
</dbReference>
<dbReference type="KEGG" id="aba:Acid345_1235"/>
<dbReference type="eggNOG" id="COG0186">
    <property type="taxonomic scope" value="Bacteria"/>
</dbReference>
<dbReference type="HOGENOM" id="CLU_073626_1_0_0"/>
<dbReference type="OrthoDB" id="9811714at2"/>
<dbReference type="Proteomes" id="UP000002432">
    <property type="component" value="Chromosome"/>
</dbReference>
<dbReference type="GO" id="GO:0022627">
    <property type="term" value="C:cytosolic small ribosomal subunit"/>
    <property type="evidence" value="ECO:0007669"/>
    <property type="project" value="TreeGrafter"/>
</dbReference>
<dbReference type="GO" id="GO:0019843">
    <property type="term" value="F:rRNA binding"/>
    <property type="evidence" value="ECO:0007669"/>
    <property type="project" value="UniProtKB-UniRule"/>
</dbReference>
<dbReference type="GO" id="GO:0003735">
    <property type="term" value="F:structural constituent of ribosome"/>
    <property type="evidence" value="ECO:0007669"/>
    <property type="project" value="InterPro"/>
</dbReference>
<dbReference type="GO" id="GO:0006412">
    <property type="term" value="P:translation"/>
    <property type="evidence" value="ECO:0007669"/>
    <property type="project" value="UniProtKB-UniRule"/>
</dbReference>
<dbReference type="CDD" id="cd00364">
    <property type="entry name" value="Ribosomal_uS17"/>
    <property type="match status" value="1"/>
</dbReference>
<dbReference type="Gene3D" id="2.40.50.140">
    <property type="entry name" value="Nucleic acid-binding proteins"/>
    <property type="match status" value="1"/>
</dbReference>
<dbReference type="HAMAP" id="MF_01345_B">
    <property type="entry name" value="Ribosomal_uS17_B"/>
    <property type="match status" value="1"/>
</dbReference>
<dbReference type="InterPro" id="IPR012340">
    <property type="entry name" value="NA-bd_OB-fold"/>
</dbReference>
<dbReference type="InterPro" id="IPR000266">
    <property type="entry name" value="Ribosomal_uS17"/>
</dbReference>
<dbReference type="InterPro" id="IPR019984">
    <property type="entry name" value="Ribosomal_uS17_bact/chlr"/>
</dbReference>
<dbReference type="InterPro" id="IPR019979">
    <property type="entry name" value="Ribosomal_uS17_CS"/>
</dbReference>
<dbReference type="NCBIfam" id="NF004123">
    <property type="entry name" value="PRK05610.1"/>
    <property type="match status" value="1"/>
</dbReference>
<dbReference type="NCBIfam" id="TIGR03635">
    <property type="entry name" value="uS17_bact"/>
    <property type="match status" value="1"/>
</dbReference>
<dbReference type="PANTHER" id="PTHR10744">
    <property type="entry name" value="40S RIBOSOMAL PROTEIN S11 FAMILY MEMBER"/>
    <property type="match status" value="1"/>
</dbReference>
<dbReference type="PANTHER" id="PTHR10744:SF1">
    <property type="entry name" value="SMALL RIBOSOMAL SUBUNIT PROTEIN US17M"/>
    <property type="match status" value="1"/>
</dbReference>
<dbReference type="Pfam" id="PF00366">
    <property type="entry name" value="Ribosomal_S17"/>
    <property type="match status" value="1"/>
</dbReference>
<dbReference type="PRINTS" id="PR00973">
    <property type="entry name" value="RIBOSOMALS17"/>
</dbReference>
<dbReference type="SUPFAM" id="SSF50249">
    <property type="entry name" value="Nucleic acid-binding proteins"/>
    <property type="match status" value="1"/>
</dbReference>
<dbReference type="PROSITE" id="PS00056">
    <property type="entry name" value="RIBOSOMAL_S17"/>
    <property type="match status" value="1"/>
</dbReference>
<protein>
    <recommendedName>
        <fullName evidence="1">Small ribosomal subunit protein uS17</fullName>
    </recommendedName>
    <alternativeName>
        <fullName evidence="2">30S ribosomal protein S17</fullName>
    </alternativeName>
</protein>
<gene>
    <name evidence="1" type="primary">rpsQ</name>
    <name type="ordered locus">Acid345_1235</name>
</gene>